<accession>P30688</accession>
<proteinExistence type="inferred from homology"/>
<comment type="function">
    <text>Serves as a slightly cation selective porin.</text>
</comment>
<comment type="subunit">
    <text>Homotrimer.</text>
</comment>
<comment type="subcellular location">
    <subcellularLocation>
        <location>Cell outer membrane</location>
        <topology>Multi-pass membrane protein</topology>
    </subcellularLocation>
</comment>
<comment type="similarity">
    <text evidence="1">Belongs to the Gram-negative porin family.</text>
</comment>
<keyword id="KW-0998">Cell outer membrane</keyword>
<keyword id="KW-0406">Ion transport</keyword>
<keyword id="KW-0472">Membrane</keyword>
<keyword id="KW-0626">Porin</keyword>
<keyword id="KW-0732">Signal</keyword>
<keyword id="KW-0812">Transmembrane</keyword>
<keyword id="KW-1134">Transmembrane beta strand</keyword>
<keyword id="KW-0813">Transport</keyword>
<organism>
    <name type="scientific">Neisseria meningitidis serogroup B</name>
    <dbReference type="NCBI Taxonomy" id="491"/>
    <lineage>
        <taxon>Bacteria</taxon>
        <taxon>Pseudomonadati</taxon>
        <taxon>Pseudomonadota</taxon>
        <taxon>Betaproteobacteria</taxon>
        <taxon>Neisseriales</taxon>
        <taxon>Neisseriaceae</taxon>
        <taxon>Neisseria</taxon>
    </lineage>
</organism>
<protein>
    <recommendedName>
        <fullName>Major outer membrane protein P.IB</fullName>
        <shortName>PIB</shortName>
        <shortName>Protein IB</shortName>
    </recommendedName>
    <alternativeName>
        <fullName>Class 3 protein</fullName>
    </alternativeName>
    <alternativeName>
        <fullName>Porin</fullName>
    </alternativeName>
</protein>
<sequence length="331" mass="35741">MKKSLIALTLAALPVAAMADVTLYGTIKAGVETSRSVEHNGGQVVSVETGTGIVDLGSKIGFKGQEDLGNGLKAIWQVEQKASIAGTDSGWGNRQSFIGLKGGFGKLRVGRLNSVLKDTGDINPWDSKSDYLGVNKIAEPEARLISVRYDSPEFAGLSGSVQYALNDNAGKYNSESYHAGFNYKNGGFFVQYGGAYKRHVRVDENVNIEKYQIHRLVSGYDNDALHASVAVQQQDAKLVEDNYSHNSQTEVAATLAYRFGNVTPRVSYAHGFKGSFDDADLSNDYDQVVVGAEYDFSKRTSALVSAGWLQEGKGENKFVSTAGGVGLRHKF</sequence>
<feature type="signal peptide">
    <location>
        <begin position="1"/>
        <end position="19"/>
    </location>
</feature>
<feature type="chain" id="PRO_0000025283" description="Major outer membrane protein P.IB">
    <location>
        <begin position="20"/>
        <end position="331"/>
    </location>
</feature>
<feature type="sequence variant" description="In strain: CU385.">
    <original>NG</original>
    <variation>KR</variation>
    <location>
        <begin position="70"/>
        <end position="71"/>
    </location>
</feature>
<reference key="1">
    <citation type="journal article" date="1992" name="FEMS Microbiol. Lett.">
        <title>Sequence analysis and relationships between meningococcal class 3 serotype proteins and other porins from pathogenic and non-pathogenic Neisseria species.</title>
        <authorList>
            <person name="Ward M.J."/>
            <person name="Lambden P.R."/>
            <person name="Heckels J.E."/>
        </authorList>
    </citation>
    <scope>NUCLEOTIDE SEQUENCE [GENOMIC DNA]</scope>
    <source>
        <strain>CCUG 37604 / M981 / Serogroup B / Serotype 4</strain>
    </source>
</reference>
<reference key="2">
    <citation type="journal article" date="1992" name="Mol. Microbiol.">
        <title>Identification of variable region differences in Neisseria meningitidis class 3 protein sequences among five group B serotypes.</title>
        <authorList>
            <person name="Zapata G.A."/>
            <person name="Vann W.F."/>
            <person name="Rubinstein Y."/>
            <person name="Frasch C.E."/>
        </authorList>
    </citation>
    <scope>NUCLEOTIDE SEQUENCE [GENOMIC DNA]</scope>
    <source>
        <strain>CU385 / Serogroup B / Serotype 4 / Subtype 15</strain>
    </source>
</reference>
<dbReference type="EMBL" id="X65531">
    <property type="protein sequence ID" value="CAA46501.1"/>
    <property type="molecule type" value="Genomic_DNA"/>
</dbReference>
<dbReference type="PIR" id="S21409">
    <property type="entry name" value="S21409"/>
</dbReference>
<dbReference type="PIR" id="S28441">
    <property type="entry name" value="S28441"/>
</dbReference>
<dbReference type="SMR" id="P30688"/>
<dbReference type="GO" id="GO:0009279">
    <property type="term" value="C:cell outer membrane"/>
    <property type="evidence" value="ECO:0007669"/>
    <property type="project" value="UniProtKB-SubCell"/>
</dbReference>
<dbReference type="GO" id="GO:0046930">
    <property type="term" value="C:pore complex"/>
    <property type="evidence" value="ECO:0007669"/>
    <property type="project" value="UniProtKB-KW"/>
</dbReference>
<dbReference type="GO" id="GO:0015288">
    <property type="term" value="F:porin activity"/>
    <property type="evidence" value="ECO:0007669"/>
    <property type="project" value="UniProtKB-KW"/>
</dbReference>
<dbReference type="GO" id="GO:0034220">
    <property type="term" value="P:monoatomic ion transmembrane transport"/>
    <property type="evidence" value="ECO:0007669"/>
    <property type="project" value="InterPro"/>
</dbReference>
<dbReference type="CDD" id="cd00342">
    <property type="entry name" value="gram_neg_porins"/>
    <property type="match status" value="1"/>
</dbReference>
<dbReference type="Gene3D" id="2.40.160.10">
    <property type="entry name" value="Porin"/>
    <property type="match status" value="1"/>
</dbReference>
<dbReference type="InterPro" id="IPR050298">
    <property type="entry name" value="Gram-neg_bact_OMP"/>
</dbReference>
<dbReference type="InterPro" id="IPR033900">
    <property type="entry name" value="Gram_neg_porin_domain"/>
</dbReference>
<dbReference type="InterPro" id="IPR023614">
    <property type="entry name" value="Porin_dom_sf"/>
</dbReference>
<dbReference type="InterPro" id="IPR001702">
    <property type="entry name" value="Porin_Gram-ve"/>
</dbReference>
<dbReference type="InterPro" id="IPR013793">
    <property type="entry name" value="Porin_Gram-ve_CS"/>
</dbReference>
<dbReference type="InterPro" id="IPR002299">
    <property type="entry name" value="Porin_Neis"/>
</dbReference>
<dbReference type="NCBIfam" id="NF040479">
    <property type="entry name" value="porin_porB_Neis"/>
    <property type="match status" value="1"/>
</dbReference>
<dbReference type="PANTHER" id="PTHR34501:SF9">
    <property type="entry name" value="MAJOR OUTER MEMBRANE PROTEIN P.IA"/>
    <property type="match status" value="1"/>
</dbReference>
<dbReference type="PANTHER" id="PTHR34501">
    <property type="entry name" value="PROTEIN YDDL-RELATED"/>
    <property type="match status" value="1"/>
</dbReference>
<dbReference type="Pfam" id="PF00267">
    <property type="entry name" value="Porin_1"/>
    <property type="match status" value="1"/>
</dbReference>
<dbReference type="PRINTS" id="PR00182">
    <property type="entry name" value="ECOLNEIPORIN"/>
</dbReference>
<dbReference type="PRINTS" id="PR00184">
    <property type="entry name" value="NEISSPPORIN"/>
</dbReference>
<dbReference type="SUPFAM" id="SSF56935">
    <property type="entry name" value="Porins"/>
    <property type="match status" value="1"/>
</dbReference>
<dbReference type="PROSITE" id="PS00576">
    <property type="entry name" value="GRAM_NEG_PORIN"/>
    <property type="match status" value="1"/>
</dbReference>
<gene>
    <name type="primary">porB</name>
</gene>
<name>OMPB3_NEIMI</name>
<evidence type="ECO:0000305" key="1"/>